<protein>
    <recommendedName>
        <fullName evidence="1">Membrane protein insertase YidC</fullName>
    </recommendedName>
    <alternativeName>
        <fullName evidence="1">Foldase YidC</fullName>
    </alternativeName>
    <alternativeName>
        <fullName evidence="1">Membrane integrase YidC</fullName>
    </alternativeName>
    <alternativeName>
        <fullName evidence="1">Membrane protein YidC</fullName>
    </alternativeName>
</protein>
<evidence type="ECO:0000255" key="1">
    <source>
        <dbReference type="HAMAP-Rule" id="MF_01810"/>
    </source>
</evidence>
<dbReference type="EMBL" id="CP001091">
    <property type="protein sequence ID" value="ACE62161.1"/>
    <property type="molecule type" value="Genomic_DNA"/>
</dbReference>
<dbReference type="RefSeq" id="WP_005602064.1">
    <property type="nucleotide sequence ID" value="NC_010939.1"/>
</dbReference>
<dbReference type="SMR" id="B3H2D6"/>
<dbReference type="KEGG" id="apa:APP7_1509"/>
<dbReference type="HOGENOM" id="CLU_016535_3_0_6"/>
<dbReference type="Proteomes" id="UP000001226">
    <property type="component" value="Chromosome"/>
</dbReference>
<dbReference type="GO" id="GO:0005886">
    <property type="term" value="C:plasma membrane"/>
    <property type="evidence" value="ECO:0007669"/>
    <property type="project" value="UniProtKB-SubCell"/>
</dbReference>
<dbReference type="GO" id="GO:0032977">
    <property type="term" value="F:membrane insertase activity"/>
    <property type="evidence" value="ECO:0007669"/>
    <property type="project" value="InterPro"/>
</dbReference>
<dbReference type="GO" id="GO:0051205">
    <property type="term" value="P:protein insertion into membrane"/>
    <property type="evidence" value="ECO:0007669"/>
    <property type="project" value="TreeGrafter"/>
</dbReference>
<dbReference type="GO" id="GO:0015031">
    <property type="term" value="P:protein transport"/>
    <property type="evidence" value="ECO:0007669"/>
    <property type="project" value="UniProtKB-KW"/>
</dbReference>
<dbReference type="CDD" id="cd20070">
    <property type="entry name" value="5TM_YidC_Alb3"/>
    <property type="match status" value="1"/>
</dbReference>
<dbReference type="CDD" id="cd19961">
    <property type="entry name" value="EcYidC-like_peri"/>
    <property type="match status" value="1"/>
</dbReference>
<dbReference type="Gene3D" id="2.70.98.90">
    <property type="match status" value="1"/>
</dbReference>
<dbReference type="HAMAP" id="MF_01810">
    <property type="entry name" value="YidC_type1"/>
    <property type="match status" value="1"/>
</dbReference>
<dbReference type="InterPro" id="IPR019998">
    <property type="entry name" value="Membr_insert_YidC"/>
</dbReference>
<dbReference type="InterPro" id="IPR028053">
    <property type="entry name" value="Membr_insert_YidC_N"/>
</dbReference>
<dbReference type="InterPro" id="IPR001708">
    <property type="entry name" value="YidC/ALB3/OXA1/COX18"/>
</dbReference>
<dbReference type="InterPro" id="IPR028055">
    <property type="entry name" value="YidC/Oxa/ALB_C"/>
</dbReference>
<dbReference type="InterPro" id="IPR047196">
    <property type="entry name" value="YidC_ALB_C"/>
</dbReference>
<dbReference type="InterPro" id="IPR038221">
    <property type="entry name" value="YidC_periplasmic_sf"/>
</dbReference>
<dbReference type="NCBIfam" id="NF002351">
    <property type="entry name" value="PRK01318.1-1"/>
    <property type="match status" value="1"/>
</dbReference>
<dbReference type="NCBIfam" id="NF002352">
    <property type="entry name" value="PRK01318.1-3"/>
    <property type="match status" value="1"/>
</dbReference>
<dbReference type="NCBIfam" id="TIGR03593">
    <property type="entry name" value="yidC_nterm"/>
    <property type="match status" value="1"/>
</dbReference>
<dbReference type="NCBIfam" id="TIGR03592">
    <property type="entry name" value="yidC_oxa1_cterm"/>
    <property type="match status" value="1"/>
</dbReference>
<dbReference type="PANTHER" id="PTHR12428:SF65">
    <property type="entry name" value="CYTOCHROME C OXIDASE ASSEMBLY PROTEIN COX18, MITOCHONDRIAL"/>
    <property type="match status" value="1"/>
</dbReference>
<dbReference type="PANTHER" id="PTHR12428">
    <property type="entry name" value="OXA1"/>
    <property type="match status" value="1"/>
</dbReference>
<dbReference type="Pfam" id="PF02096">
    <property type="entry name" value="60KD_IMP"/>
    <property type="match status" value="1"/>
</dbReference>
<dbReference type="Pfam" id="PF14849">
    <property type="entry name" value="YidC_periplas"/>
    <property type="match status" value="1"/>
</dbReference>
<dbReference type="PRINTS" id="PR00701">
    <property type="entry name" value="60KDINNERMP"/>
</dbReference>
<dbReference type="PRINTS" id="PR01900">
    <property type="entry name" value="YIDCPROTEIN"/>
</dbReference>
<accession>B3H2D6</accession>
<feature type="chain" id="PRO_1000187622" description="Membrane protein insertase YidC">
    <location>
        <begin position="1"/>
        <end position="542"/>
    </location>
</feature>
<feature type="transmembrane region" description="Helical" evidence="1">
    <location>
        <begin position="7"/>
        <end position="27"/>
    </location>
</feature>
<feature type="transmembrane region" description="Helical" evidence="1">
    <location>
        <begin position="338"/>
        <end position="358"/>
    </location>
</feature>
<feature type="transmembrane region" description="Helical" evidence="1">
    <location>
        <begin position="417"/>
        <end position="437"/>
    </location>
</feature>
<feature type="transmembrane region" description="Helical" evidence="1">
    <location>
        <begin position="455"/>
        <end position="475"/>
    </location>
</feature>
<feature type="transmembrane region" description="Helical" evidence="1">
    <location>
        <begin position="494"/>
        <end position="514"/>
    </location>
</feature>
<reference key="1">
    <citation type="submission" date="2008-06" db="EMBL/GenBank/DDBJ databases">
        <title>Genome and proteome analysis of A. pleuropneumoniae serotype 7.</title>
        <authorList>
            <person name="Linke B."/>
            <person name="Buettner F."/>
            <person name="Martinez-Arias R."/>
            <person name="Goesmann A."/>
            <person name="Baltes N."/>
            <person name="Tegetmeyer H."/>
            <person name="Singh M."/>
            <person name="Gerlach G.F."/>
        </authorList>
    </citation>
    <scope>NUCLEOTIDE SEQUENCE [LARGE SCALE GENOMIC DNA]</scope>
    <source>
        <strain>AP76</strain>
    </source>
</reference>
<name>YIDC_ACTP7</name>
<sequence>MNSNRSLLVMGLLLVSFLIFTQWQQDFNPEIQAQKQAQQQAQVASQSGDVPAASNANTVIAENATQGKTVTLESDVLRLTIDTLGGDVIASDLLAHNAELNSQTPFKLLQTGATTYVAQSGLVGKNGIDTNAGRPQYQVAQDTFVLAEGQNEMSVPMTFEKDGVLYTKTFVLKRGSYDVAVNFNVKNQTAATVEVQPYGQIKHTLLESSGSLTMPTYTGGAYSSAETNYKKYSFQDMEKANLDINTKAGWVALLQHYFVSAWVPNQDAENTIYSRTNNGIATIGYRGPVTTIAPNSEATITSQLWTGPKDQKEMEATAANLDLTVDYGWAWFIAKPLFALLTFIQSIVTNWGLAIIGVTIVVKTILYPLTKAQYTSMARMRMLQPKIQEMRERFGDDRQRMSQEMMKLYKEEKVNPMGGCLPILIQMPIFIALYWTFMEAVELRHAPFFGWIQDLSAQDPYYILPLLMGASMFLLQKMSPSPVTDPVQQKVMTFMPVMFTVFFLWFPSGLVLYWLTSNIITIVQQWLIYRNLEKKGLHSRKK</sequence>
<gene>
    <name evidence="1" type="primary">yidC</name>
    <name type="ordered locus">APP7_1509</name>
</gene>
<proteinExistence type="inferred from homology"/>
<organism>
    <name type="scientific">Actinobacillus pleuropneumoniae serotype 7 (strain AP76)</name>
    <dbReference type="NCBI Taxonomy" id="537457"/>
    <lineage>
        <taxon>Bacteria</taxon>
        <taxon>Pseudomonadati</taxon>
        <taxon>Pseudomonadota</taxon>
        <taxon>Gammaproteobacteria</taxon>
        <taxon>Pasteurellales</taxon>
        <taxon>Pasteurellaceae</taxon>
        <taxon>Actinobacillus</taxon>
    </lineage>
</organism>
<keyword id="KW-0997">Cell inner membrane</keyword>
<keyword id="KW-1003">Cell membrane</keyword>
<keyword id="KW-0143">Chaperone</keyword>
<keyword id="KW-0472">Membrane</keyword>
<keyword id="KW-0653">Protein transport</keyword>
<keyword id="KW-0812">Transmembrane</keyword>
<keyword id="KW-1133">Transmembrane helix</keyword>
<keyword id="KW-0813">Transport</keyword>
<comment type="function">
    <text evidence="1">Required for the insertion and/or proper folding and/or complex formation of integral membrane proteins into the membrane. Involved in integration of membrane proteins that insert both dependently and independently of the Sec translocase complex, as well as at least some lipoproteins. Aids folding of multispanning membrane proteins.</text>
</comment>
<comment type="subunit">
    <text evidence="1">Interacts with the Sec translocase complex via SecD. Specifically interacts with transmembrane segments of nascent integral membrane proteins during membrane integration.</text>
</comment>
<comment type="subcellular location">
    <subcellularLocation>
        <location evidence="1">Cell inner membrane</location>
        <topology evidence="1">Multi-pass membrane protein</topology>
    </subcellularLocation>
</comment>
<comment type="similarity">
    <text evidence="1">Belongs to the OXA1/ALB3/YidC family. Type 1 subfamily.</text>
</comment>